<proteinExistence type="inferred from homology"/>
<sequence length="107" mass="12130">MDQFQHISVVDAQEKLQQQDLNAVLVDIRDPQSFIRGHVENAFHLTNDTIVELMNEVDFEQPVLVMCYHGHSSQGAAQYLVNQGYEEVYSVDGGFEGWHKAGLPVEK</sequence>
<keyword id="KW-0963">Cytoplasm</keyword>
<keyword id="KW-1185">Reference proteome</keyword>
<keyword id="KW-0808">Transferase</keyword>
<organism>
    <name type="scientific">Aliivibrio fischeri (strain ATCC 700601 / ES114)</name>
    <name type="common">Vibrio fischeri</name>
    <dbReference type="NCBI Taxonomy" id="312309"/>
    <lineage>
        <taxon>Bacteria</taxon>
        <taxon>Pseudomonadati</taxon>
        <taxon>Pseudomonadota</taxon>
        <taxon>Gammaproteobacteria</taxon>
        <taxon>Vibrionales</taxon>
        <taxon>Vibrionaceae</taxon>
        <taxon>Aliivibrio</taxon>
    </lineage>
</organism>
<dbReference type="EC" id="2.8.1.1" evidence="1"/>
<dbReference type="EMBL" id="CP000020">
    <property type="protein sequence ID" value="AAW86943.1"/>
    <property type="molecule type" value="Genomic_DNA"/>
</dbReference>
<dbReference type="RefSeq" id="WP_011262814.1">
    <property type="nucleotide sequence ID" value="NC_006840.2"/>
</dbReference>
<dbReference type="RefSeq" id="YP_205831.1">
    <property type="nucleotide sequence ID" value="NC_006840.2"/>
</dbReference>
<dbReference type="SMR" id="Q5E203"/>
<dbReference type="STRING" id="312309.VF_2448"/>
<dbReference type="EnsemblBacteria" id="AAW86943">
    <property type="protein sequence ID" value="AAW86943"/>
    <property type="gene ID" value="VF_2448"/>
</dbReference>
<dbReference type="GeneID" id="54165179"/>
<dbReference type="KEGG" id="vfi:VF_2448"/>
<dbReference type="PATRIC" id="fig|312309.11.peg.2476"/>
<dbReference type="eggNOG" id="COG0607">
    <property type="taxonomic scope" value="Bacteria"/>
</dbReference>
<dbReference type="HOGENOM" id="CLU_089574_14_0_6"/>
<dbReference type="OrthoDB" id="9811849at2"/>
<dbReference type="Proteomes" id="UP000000537">
    <property type="component" value="Chromosome I"/>
</dbReference>
<dbReference type="GO" id="GO:0005737">
    <property type="term" value="C:cytoplasm"/>
    <property type="evidence" value="ECO:0007669"/>
    <property type="project" value="UniProtKB-SubCell"/>
</dbReference>
<dbReference type="GO" id="GO:0004792">
    <property type="term" value="F:thiosulfate-cyanide sulfurtransferase activity"/>
    <property type="evidence" value="ECO:0007669"/>
    <property type="project" value="UniProtKB-UniRule"/>
</dbReference>
<dbReference type="GO" id="GO:0006071">
    <property type="term" value="P:glycerol metabolic process"/>
    <property type="evidence" value="ECO:0007669"/>
    <property type="project" value="UniProtKB-UniRule"/>
</dbReference>
<dbReference type="CDD" id="cd01444">
    <property type="entry name" value="GlpE_ST"/>
    <property type="match status" value="1"/>
</dbReference>
<dbReference type="Gene3D" id="3.40.250.10">
    <property type="entry name" value="Rhodanese-like domain"/>
    <property type="match status" value="1"/>
</dbReference>
<dbReference type="HAMAP" id="MF_01009">
    <property type="entry name" value="Thiosulf_sulfurtr"/>
    <property type="match status" value="1"/>
</dbReference>
<dbReference type="InterPro" id="IPR050229">
    <property type="entry name" value="GlpE_sulfurtransferase"/>
</dbReference>
<dbReference type="InterPro" id="IPR001763">
    <property type="entry name" value="Rhodanese-like_dom"/>
</dbReference>
<dbReference type="InterPro" id="IPR036873">
    <property type="entry name" value="Rhodanese-like_dom_sf"/>
</dbReference>
<dbReference type="InterPro" id="IPR023695">
    <property type="entry name" value="Thiosulf_sulfurTrfase"/>
</dbReference>
<dbReference type="NCBIfam" id="NF001195">
    <property type="entry name" value="PRK00162.1"/>
    <property type="match status" value="1"/>
</dbReference>
<dbReference type="PANTHER" id="PTHR43031">
    <property type="entry name" value="FAD-DEPENDENT OXIDOREDUCTASE"/>
    <property type="match status" value="1"/>
</dbReference>
<dbReference type="PANTHER" id="PTHR43031:SF6">
    <property type="entry name" value="THIOSULFATE SULFURTRANSFERASE GLPE"/>
    <property type="match status" value="1"/>
</dbReference>
<dbReference type="Pfam" id="PF00581">
    <property type="entry name" value="Rhodanese"/>
    <property type="match status" value="1"/>
</dbReference>
<dbReference type="SMART" id="SM00450">
    <property type="entry name" value="RHOD"/>
    <property type="match status" value="1"/>
</dbReference>
<dbReference type="SUPFAM" id="SSF52821">
    <property type="entry name" value="Rhodanese/Cell cycle control phosphatase"/>
    <property type="match status" value="1"/>
</dbReference>
<dbReference type="PROSITE" id="PS50206">
    <property type="entry name" value="RHODANESE_3"/>
    <property type="match status" value="1"/>
</dbReference>
<protein>
    <recommendedName>
        <fullName evidence="1">Thiosulfate sulfurtransferase GlpE</fullName>
        <ecNumber evidence="1">2.8.1.1</ecNumber>
    </recommendedName>
</protein>
<comment type="function">
    <text evidence="1">Transferase that catalyzes the transfer of sulfur from thiosulfate to thiophilic acceptors such as cyanide or dithiols. May function in a CysM-independent thiosulfate assimilation pathway by catalyzing the conversion of thiosulfate to sulfite, which can then be used for L-cysteine biosynthesis.</text>
</comment>
<comment type="catalytic activity">
    <reaction evidence="1">
        <text>thiosulfate + hydrogen cyanide = thiocyanate + sulfite + 2 H(+)</text>
        <dbReference type="Rhea" id="RHEA:16881"/>
        <dbReference type="ChEBI" id="CHEBI:15378"/>
        <dbReference type="ChEBI" id="CHEBI:17359"/>
        <dbReference type="ChEBI" id="CHEBI:18022"/>
        <dbReference type="ChEBI" id="CHEBI:18407"/>
        <dbReference type="ChEBI" id="CHEBI:33542"/>
        <dbReference type="EC" id="2.8.1.1"/>
    </reaction>
</comment>
<comment type="catalytic activity">
    <reaction evidence="1">
        <text>thiosulfate + [thioredoxin]-dithiol = [thioredoxin]-disulfide + hydrogen sulfide + sulfite + 2 H(+)</text>
        <dbReference type="Rhea" id="RHEA:83859"/>
        <dbReference type="Rhea" id="RHEA-COMP:10698"/>
        <dbReference type="Rhea" id="RHEA-COMP:10700"/>
        <dbReference type="ChEBI" id="CHEBI:15378"/>
        <dbReference type="ChEBI" id="CHEBI:17359"/>
        <dbReference type="ChEBI" id="CHEBI:29919"/>
        <dbReference type="ChEBI" id="CHEBI:29950"/>
        <dbReference type="ChEBI" id="CHEBI:33542"/>
        <dbReference type="ChEBI" id="CHEBI:50058"/>
    </reaction>
</comment>
<comment type="subcellular location">
    <subcellularLocation>
        <location evidence="1">Cytoplasm</location>
    </subcellularLocation>
</comment>
<comment type="similarity">
    <text evidence="1">Belongs to the GlpE family.</text>
</comment>
<feature type="chain" id="PRO_1000062982" description="Thiosulfate sulfurtransferase GlpE">
    <location>
        <begin position="1"/>
        <end position="107"/>
    </location>
</feature>
<feature type="domain" description="Rhodanese" evidence="1">
    <location>
        <begin position="19"/>
        <end position="107"/>
    </location>
</feature>
<feature type="active site" description="Cysteine persulfide intermediate" evidence="1">
    <location>
        <position position="67"/>
    </location>
</feature>
<evidence type="ECO:0000255" key="1">
    <source>
        <dbReference type="HAMAP-Rule" id="MF_01009"/>
    </source>
</evidence>
<name>GLPE_ALIF1</name>
<accession>Q5E203</accession>
<reference key="1">
    <citation type="journal article" date="2005" name="Proc. Natl. Acad. Sci. U.S.A.">
        <title>Complete genome sequence of Vibrio fischeri: a symbiotic bacterium with pathogenic congeners.</title>
        <authorList>
            <person name="Ruby E.G."/>
            <person name="Urbanowski M."/>
            <person name="Campbell J."/>
            <person name="Dunn A."/>
            <person name="Faini M."/>
            <person name="Gunsalus R."/>
            <person name="Lostroh P."/>
            <person name="Lupp C."/>
            <person name="McCann J."/>
            <person name="Millikan D."/>
            <person name="Schaefer A."/>
            <person name="Stabb E."/>
            <person name="Stevens A."/>
            <person name="Visick K."/>
            <person name="Whistler C."/>
            <person name="Greenberg E.P."/>
        </authorList>
    </citation>
    <scope>NUCLEOTIDE SEQUENCE [LARGE SCALE GENOMIC DNA]</scope>
    <source>
        <strain>ATCC 700601 / ES114</strain>
    </source>
</reference>
<gene>
    <name evidence="1" type="primary">glpE</name>
    <name type="ordered locus">VF_2448</name>
</gene>